<accession>O55112</accession>
<accession>B1ATW0</accession>
<organism>
    <name type="scientific">Mus musculus</name>
    <name type="common">Mouse</name>
    <dbReference type="NCBI Taxonomy" id="10090"/>
    <lineage>
        <taxon>Eukaryota</taxon>
        <taxon>Metazoa</taxon>
        <taxon>Chordata</taxon>
        <taxon>Craniata</taxon>
        <taxon>Vertebrata</taxon>
        <taxon>Euteleostomi</taxon>
        <taxon>Mammalia</taxon>
        <taxon>Eutheria</taxon>
        <taxon>Euarchontoglires</taxon>
        <taxon>Glires</taxon>
        <taxon>Rodentia</taxon>
        <taxon>Myomorpha</taxon>
        <taxon>Muroidea</taxon>
        <taxon>Muridae</taxon>
        <taxon>Murinae</taxon>
        <taxon>Mus</taxon>
        <taxon>Mus</taxon>
    </lineage>
</organism>
<reference key="1">
    <citation type="journal article" date="1998" name="Hum. Mol. Genet.">
        <title>Expression of the murine homologue of FMR2 in mouse brain and during development.</title>
        <authorList>
            <person name="Chakrabarti L."/>
            <person name="Bristulf J."/>
            <person name="Foss G.S."/>
            <person name="Davies K.E."/>
        </authorList>
    </citation>
    <scope>NUCLEOTIDE SEQUENCE [MRNA]</scope>
    <source>
        <tissue>Brain</tissue>
    </source>
</reference>
<reference key="2">
    <citation type="journal article" date="2009" name="PLoS Biol.">
        <title>Lineage-specific biology revealed by a finished genome assembly of the mouse.</title>
        <authorList>
            <person name="Church D.M."/>
            <person name="Goodstadt L."/>
            <person name="Hillier L.W."/>
            <person name="Zody M.C."/>
            <person name="Goldstein S."/>
            <person name="She X."/>
            <person name="Bult C.J."/>
            <person name="Agarwala R."/>
            <person name="Cherry J.L."/>
            <person name="DiCuccio M."/>
            <person name="Hlavina W."/>
            <person name="Kapustin Y."/>
            <person name="Meric P."/>
            <person name="Maglott D."/>
            <person name="Birtle Z."/>
            <person name="Marques A.C."/>
            <person name="Graves T."/>
            <person name="Zhou S."/>
            <person name="Teague B."/>
            <person name="Potamousis K."/>
            <person name="Churas C."/>
            <person name="Place M."/>
            <person name="Herschleb J."/>
            <person name="Runnheim R."/>
            <person name="Forrest D."/>
            <person name="Amos-Landgraf J."/>
            <person name="Schwartz D.C."/>
            <person name="Cheng Z."/>
            <person name="Lindblad-Toh K."/>
            <person name="Eichler E.E."/>
            <person name="Ponting C.P."/>
        </authorList>
    </citation>
    <scope>NUCLEOTIDE SEQUENCE [LARGE SCALE GENOMIC DNA]</scope>
    <source>
        <strain>C57BL/6J</strain>
    </source>
</reference>
<reference key="3">
    <citation type="journal article" date="2009" name="Nucleic Acids Res.">
        <title>FRAXE-associated mental retardation protein (FMR2) is an RNA-binding protein with high affinity for G-quartet RNA forming structure.</title>
        <authorList>
            <person name="Bensaid M."/>
            <person name="Melko M."/>
            <person name="Bechara E.G."/>
            <person name="Davidovic L."/>
            <person name="Berretta A."/>
            <person name="Catania M.V."/>
            <person name="Gecz J."/>
            <person name="Lalli E."/>
            <person name="Bardoni B."/>
        </authorList>
    </citation>
    <scope>FUNCTION</scope>
    <scope>SUBCELLULAR LOCATION</scope>
</reference>
<feature type="chain" id="PRO_0000215913" description="AF4/FMR2 family member 2">
    <location>
        <begin position="1"/>
        <end position="1272"/>
    </location>
</feature>
<feature type="region of interest" description="Disordered" evidence="3">
    <location>
        <begin position="151"/>
        <end position="190"/>
    </location>
</feature>
<feature type="region of interest" description="Disordered" evidence="3">
    <location>
        <begin position="204"/>
        <end position="231"/>
    </location>
</feature>
<feature type="region of interest" description="Disordered" evidence="3">
    <location>
        <begin position="372"/>
        <end position="401"/>
    </location>
</feature>
<feature type="region of interest" description="Disordered" evidence="3">
    <location>
        <begin position="422"/>
        <end position="497"/>
    </location>
</feature>
<feature type="region of interest" description="Disordered" evidence="3">
    <location>
        <begin position="557"/>
        <end position="694"/>
    </location>
</feature>
<feature type="region of interest" description="Disordered" evidence="3">
    <location>
        <begin position="715"/>
        <end position="743"/>
    </location>
</feature>
<feature type="region of interest" description="Disordered" evidence="3">
    <location>
        <begin position="772"/>
        <end position="899"/>
    </location>
</feature>
<feature type="compositionally biased region" description="Basic and acidic residues" evidence="3">
    <location>
        <begin position="155"/>
        <end position="164"/>
    </location>
</feature>
<feature type="compositionally biased region" description="Low complexity" evidence="3">
    <location>
        <begin position="165"/>
        <end position="179"/>
    </location>
</feature>
<feature type="compositionally biased region" description="Polar residues" evidence="3">
    <location>
        <begin position="180"/>
        <end position="189"/>
    </location>
</feature>
<feature type="compositionally biased region" description="Low complexity" evidence="3">
    <location>
        <begin position="210"/>
        <end position="227"/>
    </location>
</feature>
<feature type="compositionally biased region" description="Polar residues" evidence="3">
    <location>
        <begin position="374"/>
        <end position="384"/>
    </location>
</feature>
<feature type="compositionally biased region" description="Basic and acidic residues" evidence="3">
    <location>
        <begin position="387"/>
        <end position="396"/>
    </location>
</feature>
<feature type="compositionally biased region" description="Polar residues" evidence="3">
    <location>
        <begin position="436"/>
        <end position="450"/>
    </location>
</feature>
<feature type="compositionally biased region" description="Polar residues" evidence="3">
    <location>
        <begin position="580"/>
        <end position="590"/>
    </location>
</feature>
<feature type="compositionally biased region" description="Basic and acidic residues" evidence="3">
    <location>
        <begin position="620"/>
        <end position="633"/>
    </location>
</feature>
<feature type="compositionally biased region" description="Basic residues" evidence="3">
    <location>
        <begin position="634"/>
        <end position="644"/>
    </location>
</feature>
<feature type="compositionally biased region" description="Low complexity" evidence="3">
    <location>
        <begin position="715"/>
        <end position="734"/>
    </location>
</feature>
<feature type="compositionally biased region" description="Basic and acidic residues" evidence="3">
    <location>
        <begin position="815"/>
        <end position="831"/>
    </location>
</feature>
<feature type="compositionally biased region" description="Pro residues" evidence="3">
    <location>
        <begin position="841"/>
        <end position="850"/>
    </location>
</feature>
<feature type="compositionally biased region" description="Polar residues" evidence="3">
    <location>
        <begin position="887"/>
        <end position="899"/>
    </location>
</feature>
<feature type="modified residue" description="Phosphoserine" evidence="2">
    <location>
        <position position="395"/>
    </location>
</feature>
<feature type="modified residue" description="Phosphothreonine" evidence="2">
    <location>
        <position position="482"/>
    </location>
</feature>
<feature type="sequence conflict" description="In Ref. 1; CAA04821." evidence="5" ref="1">
    <original>P</original>
    <variation>S</variation>
    <location>
        <position position="432"/>
    </location>
</feature>
<feature type="sequence conflict" description="In Ref. 1; CAA04821." evidence="5" ref="1">
    <original>A</original>
    <variation>S</variation>
    <location>
        <position position="544"/>
    </location>
</feature>
<feature type="sequence conflict" description="In Ref. 1; CAA04821." evidence="5" ref="1">
    <original>V</original>
    <variation>A</variation>
    <location>
        <position position="941"/>
    </location>
</feature>
<comment type="function">
    <text evidence="4">RNA-binding protein. Might be involved in alternative splicing regulation through an interaction with G-quartet RNA structure.</text>
</comment>
<comment type="subcellular location">
    <subcellularLocation>
        <location evidence="4">Nucleus speckle</location>
    </subcellularLocation>
    <text evidence="1">When splicing or transcription are inhibited, accumulates in large, rounded speckles and in the nucleolus.</text>
</comment>
<comment type="tissue specificity">
    <text>Highly expressed in the hippocampus, the piriform cortex, Purkinje cells and the cingulate gyrus.</text>
</comment>
<comment type="developmental stage">
    <text>Expressed before day 7 in the embryo and reached its highest levels at 10.5-11.5 days. In the embryo at day 11, expression is more specific in the roof of the hind brain and the lateral ventricle of the brain.</text>
</comment>
<comment type="similarity">
    <text evidence="5">Belongs to the AF4 family.</text>
</comment>
<sequence>MDLFDFFRDWDLEQQCHYEQDRSALKKREWERRNQEVQQEEDLFSSGFDLFGEPYKVAEYTNKGDALANRVQNTLGSYDEMKDLLSNHSSQNHLVGIPKNSAPQTPISKSEASFYPEQKNRMIPSHQETTHSSTPMPPPSVVILNSTLIHSNRKSKSEWPRDSHNTSPAQASQTSSQPNKMQTSTQDPPQTRLEDFFVYPAEQPQIGTVEKSNPSSKEENNPNSGGEDTFKEIFQSNSPEESEFTVQAPGSPLVASSLLAPSSGLSVPTFPPGLYCKTSMGQQKPTAYVRPMDGQDQATDISPTLKPSIEFENSFGNLSFGSLLDGKPSAVSSKTKLPKFTILQTSEVSLTSDPSCVEEILRESQHLTPGFTLQKWSDPSSRASTKMLEDDLKLSSDEDDLEPVKTLTTQCTANELYQAVEKAKPKNNPVNPLLATPQSTPATQTNVGSGSSSESESSSESDSDTESSTTDSESNEAPRVATPEPEPPSTNKWQLDKWLNKVTSQNKSFICGQNETPTETISLPPPIIQPVEVQVKVKPNPSQAVAVPKERPLLSLIREKARPRPTQKTPETKALKHKLSTSVDTVSQRTIGKKQPKKVEKNTSFEEFTWPKPNITNSTPKEKGSVELPDPPRSRNKATAHKPVPRKEPRPHVPLATEKKKYRGPGKIVPKSREFIETDSSTSDSNTDQEETLQIKVLPPCITSKSKETSNASLTLSTLTNGNSNNLSTSNEETAFSPPPAMQTELLSPLRDHENPKNLWVKIDLDLLSRVPGQNSVPVTPAKTDYKETASKPKRQTAATAVEKPAPKGKRKHKPAETAEKIPEKKQRLEDNTTICLLPPCISPAPPHKPPSTRENSSRRANRKKEEKLFPPALSPLAEDPPRRRNVSGNNGHFGQDKNISMAGQITSSKPKRSEGKFCATFKGISINEGDAPKKAASATVTVANMALATATATATVPAIVTATVTATATTTATATTTTTTTTISSITPTITSGLMDSSHLEMTSWAALPLLSSSSANVRRPKLTFDDSVHNADFYMQEAKKLKHKADALFEKFGKAVNYADAALSFTECGNAMERDPLEAKSPYTMYSETVELLRYAMRLKNFASPLASDGDKKLAVLCYRCLSLLYLRMFKLKKDHAMKYSRSLMEYFKQNASKVTQIPSPWVGNGKNTPSPVSLNNVSPINSVGNCNNGPVTIPQRIHHMAASHVNITSNVLRGYEHWDMADKLTRDNKEFFGDLDTLMGPLTQHSSMTNLVRYVRQGLCWLRIDAHLL</sequence>
<evidence type="ECO:0000250" key="1"/>
<evidence type="ECO:0000250" key="2">
    <source>
        <dbReference type="UniProtKB" id="P51816"/>
    </source>
</evidence>
<evidence type="ECO:0000256" key="3">
    <source>
        <dbReference type="SAM" id="MobiDB-lite"/>
    </source>
</evidence>
<evidence type="ECO:0000269" key="4">
    <source>
    </source>
</evidence>
<evidence type="ECO:0000305" key="5"/>
<evidence type="ECO:0000312" key="6">
    <source>
        <dbReference type="MGI" id="MGI:1202294"/>
    </source>
</evidence>
<dbReference type="EMBL" id="AJ001549">
    <property type="protein sequence ID" value="CAA04821.1"/>
    <property type="molecule type" value="mRNA"/>
</dbReference>
<dbReference type="EMBL" id="AL663113">
    <property type="status" value="NOT_ANNOTATED_CDS"/>
    <property type="molecule type" value="Genomic_DNA"/>
</dbReference>
<dbReference type="EMBL" id="AL672120">
    <property type="status" value="NOT_ANNOTATED_CDS"/>
    <property type="molecule type" value="Genomic_DNA"/>
</dbReference>
<dbReference type="EMBL" id="AL808131">
    <property type="status" value="NOT_ANNOTATED_CDS"/>
    <property type="molecule type" value="Genomic_DNA"/>
</dbReference>
<dbReference type="EMBL" id="BX294655">
    <property type="status" value="NOT_ANNOTATED_CDS"/>
    <property type="molecule type" value="Genomic_DNA"/>
</dbReference>
<dbReference type="CCDS" id="CCDS30173.1"/>
<dbReference type="PIR" id="T30248">
    <property type="entry name" value="T30248"/>
</dbReference>
<dbReference type="RefSeq" id="NP_032058.2">
    <property type="nucleotide sequence ID" value="NM_008032.4"/>
</dbReference>
<dbReference type="SMR" id="O55112"/>
<dbReference type="BioGRID" id="199717">
    <property type="interactions" value="3"/>
</dbReference>
<dbReference type="FunCoup" id="O55112">
    <property type="interactions" value="1257"/>
</dbReference>
<dbReference type="STRING" id="10090.ENSMUSP00000033532"/>
<dbReference type="GlyGen" id="O55112">
    <property type="glycosylation" value="2 sites"/>
</dbReference>
<dbReference type="iPTMnet" id="O55112"/>
<dbReference type="PhosphoSitePlus" id="O55112"/>
<dbReference type="PaxDb" id="10090-ENSMUSP00000033532"/>
<dbReference type="ProteomicsDB" id="285734"/>
<dbReference type="Antibodypedia" id="529">
    <property type="antibodies" value="151 antibodies from 23 providers"/>
</dbReference>
<dbReference type="DNASU" id="14266"/>
<dbReference type="Ensembl" id="ENSMUST00000033532.7">
    <property type="protein sequence ID" value="ENSMUSP00000033532.7"/>
    <property type="gene ID" value="ENSMUSG00000031189.13"/>
</dbReference>
<dbReference type="GeneID" id="14266"/>
<dbReference type="KEGG" id="mmu:14266"/>
<dbReference type="UCSC" id="uc009tjb.1">
    <property type="organism name" value="mouse"/>
</dbReference>
<dbReference type="AGR" id="MGI:1202294"/>
<dbReference type="CTD" id="2334"/>
<dbReference type="MGI" id="MGI:1202294">
    <property type="gene designation" value="Aff2"/>
</dbReference>
<dbReference type="VEuPathDB" id="HostDB:ENSMUSG00000031189"/>
<dbReference type="eggNOG" id="ENOG502QR32">
    <property type="taxonomic scope" value="Eukaryota"/>
</dbReference>
<dbReference type="GeneTree" id="ENSGT00950000182974"/>
<dbReference type="HOGENOM" id="CLU_006484_0_0_1"/>
<dbReference type="InParanoid" id="O55112"/>
<dbReference type="OMA" id="SMELPDP"/>
<dbReference type="OrthoDB" id="6382204at2759"/>
<dbReference type="PhylomeDB" id="O55112"/>
<dbReference type="TreeFam" id="TF326216"/>
<dbReference type="BioGRID-ORCS" id="14266">
    <property type="hits" value="2 hits in 81 CRISPR screens"/>
</dbReference>
<dbReference type="ChiTaRS" id="Aff2">
    <property type="organism name" value="mouse"/>
</dbReference>
<dbReference type="PRO" id="PR:O55112"/>
<dbReference type="Proteomes" id="UP000000589">
    <property type="component" value="Chromosome X"/>
</dbReference>
<dbReference type="RNAct" id="O55112">
    <property type="molecule type" value="protein"/>
</dbReference>
<dbReference type="Bgee" id="ENSMUSG00000031189">
    <property type="expression patterns" value="Expressed in undifferentiated genital tubercle and 76 other cell types or tissues"/>
</dbReference>
<dbReference type="GO" id="GO:0016607">
    <property type="term" value="C:nuclear speck"/>
    <property type="evidence" value="ECO:0000314"/>
    <property type="project" value="UniProtKB"/>
</dbReference>
<dbReference type="GO" id="GO:0005634">
    <property type="term" value="C:nucleus"/>
    <property type="evidence" value="ECO:0000314"/>
    <property type="project" value="MGI"/>
</dbReference>
<dbReference type="GO" id="GO:0002151">
    <property type="term" value="F:G-quadruplex RNA binding"/>
    <property type="evidence" value="ECO:0000314"/>
    <property type="project" value="UniProtKB"/>
</dbReference>
<dbReference type="GO" id="GO:0007611">
    <property type="term" value="P:learning or memory"/>
    <property type="evidence" value="ECO:0000315"/>
    <property type="project" value="MGI"/>
</dbReference>
<dbReference type="GO" id="GO:0006397">
    <property type="term" value="P:mRNA processing"/>
    <property type="evidence" value="ECO:0007669"/>
    <property type="project" value="UniProtKB-KW"/>
</dbReference>
<dbReference type="GO" id="GO:0010629">
    <property type="term" value="P:negative regulation of gene expression"/>
    <property type="evidence" value="ECO:0000315"/>
    <property type="project" value="MGI"/>
</dbReference>
<dbReference type="GO" id="GO:0035063">
    <property type="term" value="P:nuclear speck organization"/>
    <property type="evidence" value="ECO:0000266"/>
    <property type="project" value="MGI"/>
</dbReference>
<dbReference type="GO" id="GO:0010468">
    <property type="term" value="P:regulation of gene expression"/>
    <property type="evidence" value="ECO:0000266"/>
    <property type="project" value="MGI"/>
</dbReference>
<dbReference type="GO" id="GO:0043484">
    <property type="term" value="P:regulation of RNA splicing"/>
    <property type="evidence" value="ECO:0000314"/>
    <property type="project" value="UniProtKB"/>
</dbReference>
<dbReference type="GO" id="GO:0008380">
    <property type="term" value="P:RNA splicing"/>
    <property type="evidence" value="ECO:0007669"/>
    <property type="project" value="UniProtKB-KW"/>
</dbReference>
<dbReference type="Gene3D" id="6.10.250.2670">
    <property type="match status" value="1"/>
</dbReference>
<dbReference type="InterPro" id="IPR007797">
    <property type="entry name" value="AF4/FMR2"/>
</dbReference>
<dbReference type="InterPro" id="IPR043640">
    <property type="entry name" value="AF4/FMR2_CHD"/>
</dbReference>
<dbReference type="InterPro" id="IPR043639">
    <property type="entry name" value="AF4_int"/>
</dbReference>
<dbReference type="PANTHER" id="PTHR10528">
    <property type="entry name" value="AF4/FMR2 FAMILY MEMBER"/>
    <property type="match status" value="1"/>
</dbReference>
<dbReference type="PANTHER" id="PTHR10528:SF18">
    <property type="entry name" value="AF4_FMR2 FAMILY MEMBER 2"/>
    <property type="match status" value="1"/>
</dbReference>
<dbReference type="Pfam" id="PF05110">
    <property type="entry name" value="AF-4"/>
    <property type="match status" value="2"/>
</dbReference>
<dbReference type="Pfam" id="PF18875">
    <property type="entry name" value="AF4_int"/>
    <property type="match status" value="1"/>
</dbReference>
<dbReference type="Pfam" id="PF18876">
    <property type="entry name" value="AFF4_CHD"/>
    <property type="match status" value="1"/>
</dbReference>
<name>AFF2_MOUSE</name>
<gene>
    <name evidence="6" type="primary">Aff2</name>
    <name type="synonym">Fmr2</name>
    <name type="synonym">Ox19</name>
</gene>
<proteinExistence type="evidence at transcript level"/>
<keyword id="KW-0507">mRNA processing</keyword>
<keyword id="KW-0508">mRNA splicing</keyword>
<keyword id="KW-0539">Nucleus</keyword>
<keyword id="KW-0597">Phosphoprotein</keyword>
<keyword id="KW-1185">Reference proteome</keyword>
<keyword id="KW-0694">RNA-binding</keyword>
<protein>
    <recommendedName>
        <fullName evidence="6">AF4/FMR2 family member 2</fullName>
    </recommendedName>
    <alternativeName>
        <fullName>Protein FMR-2</fullName>
        <shortName>FMR2P</shortName>
    </alternativeName>
    <alternativeName>
        <fullName>Protein Ox19</fullName>
    </alternativeName>
</protein>